<evidence type="ECO:0000255" key="1"/>
<evidence type="ECO:0000255" key="2">
    <source>
        <dbReference type="PROSITE-ProRule" id="PRU00341"/>
    </source>
</evidence>
<evidence type="ECO:0000256" key="3">
    <source>
        <dbReference type="SAM" id="MobiDB-lite"/>
    </source>
</evidence>
<evidence type="ECO:0000305" key="4"/>
<name>MANS1_MACFA</name>
<accession>Q95KG7</accession>
<sequence length="431" mass="47105">MFFGGKGSLTYTLVIICFLTLRLAASQNCLNKSLEDVVIDIQSSLSKGIRGNEPIYTSTQEDCINSCCSTKIISGDKACNFMIFDTRKIARRPNCYLFFCPNEEACPLKPAKGLRSYRIIRDFPSLTRNLPSQELPQEDSLLPGQFSQAVTPLARHHIVYSKPTDISWRETLPQKFGSSDHLEKLFNMDKASAQLLVYKEKGHSQSSQISSDQEIAHLLPENVSVFPATVAVASPHTTSATPKPAIRLPTNASVTPSGTSQPQLATTSPPVTTVTSQPPTTLISTGFTRAVATLQAMATTAVLTTTFQAPTDLKGSLETIPFTEISNLTLNTGNVYNPTALSMSNVKSSATNKTASWEGREASPGRSSQGNVPENQYGLPFEKWLLIGSLLFGVLFLVIGLVLLGRILSESLRRKRYSRLDYLINGIYVDI</sequence>
<protein>
    <recommendedName>
        <fullName>MANSC domain-containing protein 1</fullName>
    </recommendedName>
</protein>
<dbReference type="EMBL" id="AB060888">
    <property type="protein sequence ID" value="BAB46892.1"/>
    <property type="molecule type" value="mRNA"/>
</dbReference>
<dbReference type="RefSeq" id="NP_001270652.1">
    <property type="nucleotide sequence ID" value="NM_001283723.1"/>
</dbReference>
<dbReference type="SMR" id="Q95KG7"/>
<dbReference type="STRING" id="9541.ENSMFAP00000016563"/>
<dbReference type="GlyCosmos" id="Q95KG7">
    <property type="glycosylation" value="5 sites, No reported glycans"/>
</dbReference>
<dbReference type="eggNOG" id="ENOG502RZBP">
    <property type="taxonomic scope" value="Eukaryota"/>
</dbReference>
<dbReference type="Proteomes" id="UP000233100">
    <property type="component" value="Unplaced"/>
</dbReference>
<dbReference type="GO" id="GO:0016020">
    <property type="term" value="C:membrane"/>
    <property type="evidence" value="ECO:0007669"/>
    <property type="project" value="UniProtKB-SubCell"/>
</dbReference>
<dbReference type="InterPro" id="IPR013980">
    <property type="entry name" value="MANSC_dom"/>
</dbReference>
<dbReference type="InterPro" id="IPR011106">
    <property type="entry name" value="MANSC_N"/>
</dbReference>
<dbReference type="PANTHER" id="PTHR46876">
    <property type="entry name" value="LOW-DENSITY LIPOPROTEIN RECEPTOR-RELATED PROTEIN 11"/>
    <property type="match status" value="1"/>
</dbReference>
<dbReference type="PANTHER" id="PTHR46876:SF3">
    <property type="entry name" value="MANSC DOMAIN CONTAINING 1"/>
    <property type="match status" value="1"/>
</dbReference>
<dbReference type="Pfam" id="PF07502">
    <property type="entry name" value="MANEC"/>
    <property type="match status" value="1"/>
</dbReference>
<dbReference type="SMART" id="SM00765">
    <property type="entry name" value="MANEC"/>
    <property type="match status" value="1"/>
</dbReference>
<dbReference type="PROSITE" id="PS50986">
    <property type="entry name" value="MANSC"/>
    <property type="match status" value="1"/>
</dbReference>
<proteinExistence type="evidence at transcript level"/>
<organism>
    <name type="scientific">Macaca fascicularis</name>
    <name type="common">Crab-eating macaque</name>
    <name type="synonym">Cynomolgus monkey</name>
    <dbReference type="NCBI Taxonomy" id="9541"/>
    <lineage>
        <taxon>Eukaryota</taxon>
        <taxon>Metazoa</taxon>
        <taxon>Chordata</taxon>
        <taxon>Craniata</taxon>
        <taxon>Vertebrata</taxon>
        <taxon>Euteleostomi</taxon>
        <taxon>Mammalia</taxon>
        <taxon>Eutheria</taxon>
        <taxon>Euarchontoglires</taxon>
        <taxon>Primates</taxon>
        <taxon>Haplorrhini</taxon>
        <taxon>Catarrhini</taxon>
        <taxon>Cercopithecidae</taxon>
        <taxon>Cercopithecinae</taxon>
        <taxon>Macaca</taxon>
    </lineage>
</organism>
<reference key="1">
    <citation type="submission" date="2001-04" db="EMBL/GenBank/DDBJ databases">
        <title>Isolation of full-length cDNA clones from macaque brain cDNA libraries.</title>
        <authorList>
            <person name="Osada N."/>
            <person name="Hida M."/>
            <person name="Kusuda J."/>
            <person name="Tanuma R."/>
            <person name="Iseki K."/>
            <person name="Hirai M."/>
            <person name="Terao K."/>
            <person name="Suzuki Y."/>
            <person name="Sugano S."/>
            <person name="Hashimoto K."/>
        </authorList>
    </citation>
    <scope>NUCLEOTIDE SEQUENCE [LARGE SCALE MRNA]</scope>
    <source>
        <tissue>Temporal cortex</tissue>
    </source>
</reference>
<feature type="signal peptide" evidence="1">
    <location>
        <begin position="1"/>
        <end position="26"/>
    </location>
</feature>
<feature type="chain" id="PRO_0000021637" description="MANSC domain-containing protein 1">
    <location>
        <begin position="27"/>
        <end position="431"/>
    </location>
</feature>
<feature type="topological domain" description="Extracellular" evidence="1">
    <location>
        <begin position="27"/>
        <end position="385"/>
    </location>
</feature>
<feature type="transmembrane region" description="Helical" evidence="1">
    <location>
        <begin position="386"/>
        <end position="408"/>
    </location>
</feature>
<feature type="topological domain" description="Cytoplasmic" evidence="1">
    <location>
        <begin position="409"/>
        <end position="431"/>
    </location>
</feature>
<feature type="domain" description="MANSC" evidence="2">
    <location>
        <begin position="33"/>
        <end position="117"/>
    </location>
</feature>
<feature type="region of interest" description="Disordered" evidence="3">
    <location>
        <begin position="236"/>
        <end position="279"/>
    </location>
</feature>
<feature type="region of interest" description="Disordered" evidence="3">
    <location>
        <begin position="352"/>
        <end position="372"/>
    </location>
</feature>
<feature type="compositionally biased region" description="Polar residues" evidence="3">
    <location>
        <begin position="250"/>
        <end position="265"/>
    </location>
</feature>
<feature type="compositionally biased region" description="Low complexity" evidence="3">
    <location>
        <begin position="266"/>
        <end position="279"/>
    </location>
</feature>
<feature type="glycosylation site" description="N-linked (GlcNAc...) asparagine" evidence="1">
    <location>
        <position position="31"/>
    </location>
</feature>
<feature type="glycosylation site" description="N-linked (GlcNAc...) asparagine" evidence="1">
    <location>
        <position position="222"/>
    </location>
</feature>
<feature type="glycosylation site" description="N-linked (GlcNAc...) asparagine" evidence="1">
    <location>
        <position position="251"/>
    </location>
</feature>
<feature type="glycosylation site" description="N-linked (GlcNAc...) asparagine" evidence="1">
    <location>
        <position position="327"/>
    </location>
</feature>
<feature type="glycosylation site" description="N-linked (GlcNAc...) asparagine" evidence="1">
    <location>
        <position position="352"/>
    </location>
</feature>
<gene>
    <name type="primary">MANSC1</name>
    <name type="ORF">QtrA-13483</name>
</gene>
<keyword id="KW-0325">Glycoprotein</keyword>
<keyword id="KW-0472">Membrane</keyword>
<keyword id="KW-1185">Reference proteome</keyword>
<keyword id="KW-0732">Signal</keyword>
<keyword id="KW-0812">Transmembrane</keyword>
<keyword id="KW-1133">Transmembrane helix</keyword>
<comment type="subcellular location">
    <subcellularLocation>
        <location evidence="4">Membrane</location>
        <topology evidence="4">Single-pass type I membrane protein</topology>
    </subcellularLocation>
</comment>